<reference key="1">
    <citation type="journal article" date="1999" name="Nature">
        <title>Sequence and analysis of chromosome 4 of the plant Arabidopsis thaliana.</title>
        <authorList>
            <person name="Mayer K.F.X."/>
            <person name="Schueller C."/>
            <person name="Wambutt R."/>
            <person name="Murphy G."/>
            <person name="Volckaert G."/>
            <person name="Pohl T."/>
            <person name="Duesterhoeft A."/>
            <person name="Stiekema W."/>
            <person name="Entian K.-D."/>
            <person name="Terryn N."/>
            <person name="Harris B."/>
            <person name="Ansorge W."/>
            <person name="Brandt P."/>
            <person name="Grivell L.A."/>
            <person name="Rieger M."/>
            <person name="Weichselgartner M."/>
            <person name="de Simone V."/>
            <person name="Obermaier B."/>
            <person name="Mache R."/>
            <person name="Mueller M."/>
            <person name="Kreis M."/>
            <person name="Delseny M."/>
            <person name="Puigdomenech P."/>
            <person name="Watson M."/>
            <person name="Schmidtheini T."/>
            <person name="Reichert B."/>
            <person name="Portetelle D."/>
            <person name="Perez-Alonso M."/>
            <person name="Boutry M."/>
            <person name="Bancroft I."/>
            <person name="Vos P."/>
            <person name="Hoheisel J."/>
            <person name="Zimmermann W."/>
            <person name="Wedler H."/>
            <person name="Ridley P."/>
            <person name="Langham S.-A."/>
            <person name="McCullagh B."/>
            <person name="Bilham L."/>
            <person name="Robben J."/>
            <person name="van der Schueren J."/>
            <person name="Grymonprez B."/>
            <person name="Chuang Y.-J."/>
            <person name="Vandenbussche F."/>
            <person name="Braeken M."/>
            <person name="Weltjens I."/>
            <person name="Voet M."/>
            <person name="Bastiaens I."/>
            <person name="Aert R."/>
            <person name="Defoor E."/>
            <person name="Weitzenegger T."/>
            <person name="Bothe G."/>
            <person name="Ramsperger U."/>
            <person name="Hilbert H."/>
            <person name="Braun M."/>
            <person name="Holzer E."/>
            <person name="Brandt A."/>
            <person name="Peters S."/>
            <person name="van Staveren M."/>
            <person name="Dirkse W."/>
            <person name="Mooijman P."/>
            <person name="Klein Lankhorst R."/>
            <person name="Rose M."/>
            <person name="Hauf J."/>
            <person name="Koetter P."/>
            <person name="Berneiser S."/>
            <person name="Hempel S."/>
            <person name="Feldpausch M."/>
            <person name="Lamberth S."/>
            <person name="Van den Daele H."/>
            <person name="De Keyser A."/>
            <person name="Buysshaert C."/>
            <person name="Gielen J."/>
            <person name="Villarroel R."/>
            <person name="De Clercq R."/>
            <person name="van Montagu M."/>
            <person name="Rogers J."/>
            <person name="Cronin A."/>
            <person name="Quail M.A."/>
            <person name="Bray-Allen S."/>
            <person name="Clark L."/>
            <person name="Doggett J."/>
            <person name="Hall S."/>
            <person name="Kay M."/>
            <person name="Lennard N."/>
            <person name="McLay K."/>
            <person name="Mayes R."/>
            <person name="Pettett A."/>
            <person name="Rajandream M.A."/>
            <person name="Lyne M."/>
            <person name="Benes V."/>
            <person name="Rechmann S."/>
            <person name="Borkova D."/>
            <person name="Bloecker H."/>
            <person name="Scharfe M."/>
            <person name="Grimm M."/>
            <person name="Loehnert T.-H."/>
            <person name="Dose S."/>
            <person name="de Haan M."/>
            <person name="Maarse A.C."/>
            <person name="Schaefer M."/>
            <person name="Mueller-Auer S."/>
            <person name="Gabel C."/>
            <person name="Fuchs M."/>
            <person name="Fartmann B."/>
            <person name="Granderath K."/>
            <person name="Dauner D."/>
            <person name="Herzl A."/>
            <person name="Neumann S."/>
            <person name="Argiriou A."/>
            <person name="Vitale D."/>
            <person name="Liguori R."/>
            <person name="Piravandi E."/>
            <person name="Massenet O."/>
            <person name="Quigley F."/>
            <person name="Clabauld G."/>
            <person name="Muendlein A."/>
            <person name="Felber R."/>
            <person name="Schnabl S."/>
            <person name="Hiller R."/>
            <person name="Schmidt W."/>
            <person name="Lecharny A."/>
            <person name="Aubourg S."/>
            <person name="Chefdor F."/>
            <person name="Cooke R."/>
            <person name="Berger C."/>
            <person name="Monfort A."/>
            <person name="Casacuberta E."/>
            <person name="Gibbons T."/>
            <person name="Weber N."/>
            <person name="Vandenbol M."/>
            <person name="Bargues M."/>
            <person name="Terol J."/>
            <person name="Torres A."/>
            <person name="Perez-Perez A."/>
            <person name="Purnelle B."/>
            <person name="Bent E."/>
            <person name="Johnson S."/>
            <person name="Tacon D."/>
            <person name="Jesse T."/>
            <person name="Heijnen L."/>
            <person name="Schwarz S."/>
            <person name="Scholler P."/>
            <person name="Heber S."/>
            <person name="Francs P."/>
            <person name="Bielke C."/>
            <person name="Frishman D."/>
            <person name="Haase D."/>
            <person name="Lemcke K."/>
            <person name="Mewes H.-W."/>
            <person name="Stocker S."/>
            <person name="Zaccaria P."/>
            <person name="Bevan M."/>
            <person name="Wilson R.K."/>
            <person name="de la Bastide M."/>
            <person name="Habermann K."/>
            <person name="Parnell L."/>
            <person name="Dedhia N."/>
            <person name="Gnoj L."/>
            <person name="Schutz K."/>
            <person name="Huang E."/>
            <person name="Spiegel L."/>
            <person name="Sekhon M."/>
            <person name="Murray J."/>
            <person name="Sheet P."/>
            <person name="Cordes M."/>
            <person name="Abu-Threideh J."/>
            <person name="Stoneking T."/>
            <person name="Kalicki J."/>
            <person name="Graves T."/>
            <person name="Harmon G."/>
            <person name="Edwards J."/>
            <person name="Latreille P."/>
            <person name="Courtney L."/>
            <person name="Cloud J."/>
            <person name="Abbott A."/>
            <person name="Scott K."/>
            <person name="Johnson D."/>
            <person name="Minx P."/>
            <person name="Bentley D."/>
            <person name="Fulton B."/>
            <person name="Miller N."/>
            <person name="Greco T."/>
            <person name="Kemp K."/>
            <person name="Kramer J."/>
            <person name="Fulton L."/>
            <person name="Mardis E."/>
            <person name="Dante M."/>
            <person name="Pepin K."/>
            <person name="Hillier L.W."/>
            <person name="Nelson J."/>
            <person name="Spieth J."/>
            <person name="Ryan E."/>
            <person name="Andrews S."/>
            <person name="Geisel C."/>
            <person name="Layman D."/>
            <person name="Du H."/>
            <person name="Ali J."/>
            <person name="Berghoff A."/>
            <person name="Jones K."/>
            <person name="Drone K."/>
            <person name="Cotton M."/>
            <person name="Joshu C."/>
            <person name="Antonoiu B."/>
            <person name="Zidanic M."/>
            <person name="Strong C."/>
            <person name="Sun H."/>
            <person name="Lamar B."/>
            <person name="Yordan C."/>
            <person name="Ma P."/>
            <person name="Zhong J."/>
            <person name="Preston R."/>
            <person name="Vil D."/>
            <person name="Shekher M."/>
            <person name="Matero A."/>
            <person name="Shah R."/>
            <person name="Swaby I.K."/>
            <person name="O'Shaughnessy A."/>
            <person name="Rodriguez M."/>
            <person name="Hoffman J."/>
            <person name="Till S."/>
            <person name="Granat S."/>
            <person name="Shohdy N."/>
            <person name="Hasegawa A."/>
            <person name="Hameed A."/>
            <person name="Lodhi M."/>
            <person name="Johnson A."/>
            <person name="Chen E."/>
            <person name="Marra M.A."/>
            <person name="Martienssen R."/>
            <person name="McCombie W.R."/>
        </authorList>
    </citation>
    <scope>NUCLEOTIDE SEQUENCE [LARGE SCALE GENOMIC DNA]</scope>
    <source>
        <strain>cv. Columbia</strain>
    </source>
</reference>
<reference key="2">
    <citation type="journal article" date="2017" name="Plant J.">
        <title>Araport11: a complete reannotation of the Arabidopsis thaliana reference genome.</title>
        <authorList>
            <person name="Cheng C.Y."/>
            <person name="Krishnakumar V."/>
            <person name="Chan A.P."/>
            <person name="Thibaud-Nissen F."/>
            <person name="Schobel S."/>
            <person name="Town C.D."/>
        </authorList>
    </citation>
    <scope>GENOME REANNOTATION</scope>
    <source>
        <strain>cv. Columbia</strain>
    </source>
</reference>
<reference key="3">
    <citation type="journal article" date="1999" name="Plant Mol. Biol.">
        <title>Analysis of Arabidopsis genome sequence reveals a large new gene family in plants.</title>
        <authorList>
            <person name="Ride J.P."/>
            <person name="Davies E.M."/>
            <person name="Franklin F.C.H."/>
            <person name="Marshall D.F."/>
        </authorList>
    </citation>
    <scope>GENE FAMILY</scope>
    <scope>NOMENCLATURE</scope>
    <source>
        <strain>cv. Columbia</strain>
    </source>
</reference>
<proteinExistence type="inferred from homology"/>
<feature type="signal peptide" evidence="1">
    <location>
        <begin position="1"/>
        <end position="26"/>
    </location>
</feature>
<feature type="chain" id="PRO_0000439572" description="S-protein homolog 19">
    <location>
        <begin position="27"/>
        <end position="132"/>
    </location>
</feature>
<feature type="glycosylation site" description="N-linked (GlcNAc...) asparagine" evidence="2">
    <location>
        <position position="87"/>
    </location>
</feature>
<protein>
    <recommendedName>
        <fullName evidence="3">S-protein homolog 19</fullName>
    </recommendedName>
</protein>
<name>SPH19_ARATH</name>
<evidence type="ECO:0000255" key="1"/>
<evidence type="ECO:0000255" key="2">
    <source>
        <dbReference type="PROSITE-ProRule" id="PRU00498"/>
    </source>
</evidence>
<evidence type="ECO:0000303" key="3">
    <source>
    </source>
</evidence>
<evidence type="ECO:0000305" key="4"/>
<evidence type="ECO:0000305" key="5">
    <source>
    </source>
</evidence>
<evidence type="ECO:0000312" key="6">
    <source>
        <dbReference type="Araport" id="AT4G24974"/>
    </source>
</evidence>
<gene>
    <name evidence="3" type="primary">SPH19</name>
    <name evidence="6" type="ordered locus">At4g24974</name>
    <name evidence="4" type="ORF">F6I7</name>
</gene>
<sequence>MSGSLAFHIIMSVTFMVFFFGGLCEARGVNVDLINDIGPNVQLGLHCKSKNKDLGSQSLVSDQHWGFRASLGFWTVTLFFCHFEWENQSKWFDIFVEDRDLTCGDHCVWSIRPSGPCRLTGREKCFPWNNKY</sequence>
<dbReference type="EMBL" id="AL049657">
    <property type="status" value="NOT_ANNOTATED_CDS"/>
    <property type="molecule type" value="Genomic_DNA"/>
</dbReference>
<dbReference type="EMBL" id="CP002687">
    <property type="protein sequence ID" value="AEE84986.1"/>
    <property type="molecule type" value="Genomic_DNA"/>
</dbReference>
<dbReference type="RefSeq" id="NP_001119050.1">
    <property type="nucleotide sequence ID" value="NM_001125578.1"/>
</dbReference>
<dbReference type="SMR" id="B3H7A6"/>
<dbReference type="STRING" id="3702.B3H7A6"/>
<dbReference type="GlyCosmos" id="B3H7A6">
    <property type="glycosylation" value="1 site, No reported glycans"/>
</dbReference>
<dbReference type="GlyGen" id="B3H7A6">
    <property type="glycosylation" value="1 site"/>
</dbReference>
<dbReference type="PaxDb" id="3702-AT4G24974.1"/>
<dbReference type="ProteomicsDB" id="245339"/>
<dbReference type="EnsemblPlants" id="AT4G24974.1">
    <property type="protein sequence ID" value="AT4G24974.1"/>
    <property type="gene ID" value="AT4G24974"/>
</dbReference>
<dbReference type="GeneID" id="6240447"/>
<dbReference type="Gramene" id="AT4G24974.1">
    <property type="protein sequence ID" value="AT4G24974.1"/>
    <property type="gene ID" value="AT4G24974"/>
</dbReference>
<dbReference type="KEGG" id="ath:AT4G24974"/>
<dbReference type="Araport" id="AT4G24974"/>
<dbReference type="TAIR" id="AT4G24974"/>
<dbReference type="eggNOG" id="ENOG502SVTJ">
    <property type="taxonomic scope" value="Eukaryota"/>
</dbReference>
<dbReference type="HOGENOM" id="CLU_125658_0_2_1"/>
<dbReference type="InParanoid" id="B3H7A6"/>
<dbReference type="OMA" id="ERDSFIC"/>
<dbReference type="PhylomeDB" id="B3H7A6"/>
<dbReference type="PRO" id="PR:B3H7A6"/>
<dbReference type="Proteomes" id="UP000006548">
    <property type="component" value="Chromosome 4"/>
</dbReference>
<dbReference type="ExpressionAtlas" id="B3H7A6">
    <property type="expression patterns" value="baseline"/>
</dbReference>
<dbReference type="GO" id="GO:0005576">
    <property type="term" value="C:extracellular region"/>
    <property type="evidence" value="ECO:0007669"/>
    <property type="project" value="UniProtKB-SubCell"/>
</dbReference>
<dbReference type="GO" id="GO:0060320">
    <property type="term" value="P:rejection of self pollen"/>
    <property type="evidence" value="ECO:0007669"/>
    <property type="project" value="UniProtKB-KW"/>
</dbReference>
<dbReference type="InterPro" id="IPR010264">
    <property type="entry name" value="Self-incomp_S1"/>
</dbReference>
<dbReference type="PANTHER" id="PTHR31232">
    <property type="match status" value="1"/>
</dbReference>
<dbReference type="PANTHER" id="PTHR31232:SF163">
    <property type="entry name" value="S-PROTEIN HOMOLOG 18-RELATED"/>
    <property type="match status" value="1"/>
</dbReference>
<dbReference type="Pfam" id="PF05938">
    <property type="entry name" value="Self-incomp_S1"/>
    <property type="match status" value="1"/>
</dbReference>
<accession>B3H7A6</accession>
<organism>
    <name type="scientific">Arabidopsis thaliana</name>
    <name type="common">Mouse-ear cress</name>
    <dbReference type="NCBI Taxonomy" id="3702"/>
    <lineage>
        <taxon>Eukaryota</taxon>
        <taxon>Viridiplantae</taxon>
        <taxon>Streptophyta</taxon>
        <taxon>Embryophyta</taxon>
        <taxon>Tracheophyta</taxon>
        <taxon>Spermatophyta</taxon>
        <taxon>Magnoliopsida</taxon>
        <taxon>eudicotyledons</taxon>
        <taxon>Gunneridae</taxon>
        <taxon>Pentapetalae</taxon>
        <taxon>rosids</taxon>
        <taxon>malvids</taxon>
        <taxon>Brassicales</taxon>
        <taxon>Brassicaceae</taxon>
        <taxon>Camelineae</taxon>
        <taxon>Arabidopsis</taxon>
    </lineage>
</organism>
<keyword id="KW-0325">Glycoprotein</keyword>
<keyword id="KW-1185">Reference proteome</keyword>
<keyword id="KW-0964">Secreted</keyword>
<keyword id="KW-0713">Self-incompatibility</keyword>
<keyword id="KW-0732">Signal</keyword>
<comment type="subcellular location">
    <subcellularLocation>
        <location evidence="5">Secreted</location>
    </subcellularLocation>
</comment>
<comment type="similarity">
    <text evidence="4">Belongs to the plant self-incompatibility (S1) protein family.</text>
</comment>